<reference key="1">
    <citation type="submission" date="2006-06" db="EMBL/GenBank/DDBJ databases">
        <title>Complete sequence of chromosome of Mesorhizobium sp. BNC1.</title>
        <authorList>
            <consortium name="US DOE Joint Genome Institute"/>
            <person name="Copeland A."/>
            <person name="Lucas S."/>
            <person name="Lapidus A."/>
            <person name="Barry K."/>
            <person name="Detter J.C."/>
            <person name="Glavina del Rio T."/>
            <person name="Hammon N."/>
            <person name="Israni S."/>
            <person name="Dalin E."/>
            <person name="Tice H."/>
            <person name="Pitluck S."/>
            <person name="Chertkov O."/>
            <person name="Brettin T."/>
            <person name="Bruce D."/>
            <person name="Han C."/>
            <person name="Tapia R."/>
            <person name="Gilna P."/>
            <person name="Schmutz J."/>
            <person name="Larimer F."/>
            <person name="Land M."/>
            <person name="Hauser L."/>
            <person name="Kyrpides N."/>
            <person name="Mikhailova N."/>
            <person name="Richardson P."/>
        </authorList>
    </citation>
    <scope>NUCLEOTIDE SEQUENCE [LARGE SCALE GENOMIC DNA]</scope>
    <source>
        <strain>BNC1</strain>
    </source>
</reference>
<evidence type="ECO:0000255" key="1">
    <source>
        <dbReference type="HAMAP-Rule" id="MF_00003"/>
    </source>
</evidence>
<dbReference type="EMBL" id="CP000390">
    <property type="protein sequence ID" value="ABG65298.1"/>
    <property type="molecule type" value="Genomic_DNA"/>
</dbReference>
<dbReference type="SMR" id="Q11BC7"/>
<dbReference type="STRING" id="266779.Meso_3931"/>
<dbReference type="KEGG" id="mes:Meso_3931"/>
<dbReference type="eggNOG" id="COG0858">
    <property type="taxonomic scope" value="Bacteria"/>
</dbReference>
<dbReference type="HOGENOM" id="CLU_089475_1_0_5"/>
<dbReference type="OrthoDB" id="9805051at2"/>
<dbReference type="GO" id="GO:0005829">
    <property type="term" value="C:cytosol"/>
    <property type="evidence" value="ECO:0007669"/>
    <property type="project" value="TreeGrafter"/>
</dbReference>
<dbReference type="GO" id="GO:0043024">
    <property type="term" value="F:ribosomal small subunit binding"/>
    <property type="evidence" value="ECO:0007669"/>
    <property type="project" value="TreeGrafter"/>
</dbReference>
<dbReference type="GO" id="GO:0030490">
    <property type="term" value="P:maturation of SSU-rRNA"/>
    <property type="evidence" value="ECO:0007669"/>
    <property type="project" value="UniProtKB-UniRule"/>
</dbReference>
<dbReference type="Gene3D" id="3.30.300.20">
    <property type="match status" value="1"/>
</dbReference>
<dbReference type="HAMAP" id="MF_00003">
    <property type="entry name" value="RbfA"/>
    <property type="match status" value="1"/>
</dbReference>
<dbReference type="InterPro" id="IPR015946">
    <property type="entry name" value="KH_dom-like_a/b"/>
</dbReference>
<dbReference type="InterPro" id="IPR000238">
    <property type="entry name" value="RbfA"/>
</dbReference>
<dbReference type="InterPro" id="IPR023799">
    <property type="entry name" value="RbfA_dom_sf"/>
</dbReference>
<dbReference type="InterPro" id="IPR020053">
    <property type="entry name" value="Ribosome-bd_factorA_CS"/>
</dbReference>
<dbReference type="NCBIfam" id="NF001802">
    <property type="entry name" value="PRK00521.2-5"/>
    <property type="match status" value="1"/>
</dbReference>
<dbReference type="NCBIfam" id="TIGR00082">
    <property type="entry name" value="rbfA"/>
    <property type="match status" value="1"/>
</dbReference>
<dbReference type="PANTHER" id="PTHR33515">
    <property type="entry name" value="RIBOSOME-BINDING FACTOR A, CHLOROPLASTIC-RELATED"/>
    <property type="match status" value="1"/>
</dbReference>
<dbReference type="PANTHER" id="PTHR33515:SF1">
    <property type="entry name" value="RIBOSOME-BINDING FACTOR A, CHLOROPLASTIC-RELATED"/>
    <property type="match status" value="1"/>
</dbReference>
<dbReference type="Pfam" id="PF02033">
    <property type="entry name" value="RBFA"/>
    <property type="match status" value="1"/>
</dbReference>
<dbReference type="SUPFAM" id="SSF89919">
    <property type="entry name" value="Ribosome-binding factor A, RbfA"/>
    <property type="match status" value="1"/>
</dbReference>
<dbReference type="PROSITE" id="PS01319">
    <property type="entry name" value="RBFA"/>
    <property type="match status" value="1"/>
</dbReference>
<feature type="chain" id="PRO_1000000138" description="Ribosome-binding factor A">
    <location>
        <begin position="1"/>
        <end position="133"/>
    </location>
</feature>
<sequence>MPSSAPSQRQLRVGEQARHALSDVLQREDMRDPALEGAVISVSEVRMSPDLKIATVFVSPLSGDKEAIIAALNRHARYIRGRVSPALRQMKYMPEFRFHLDTSYENFEKIDRILRSPEVARDLGDADDEDDNG</sequence>
<name>RBFA_CHESB</name>
<comment type="function">
    <text evidence="1">One of several proteins that assist in the late maturation steps of the functional core of the 30S ribosomal subunit. Associates with free 30S ribosomal subunits (but not with 30S subunits that are part of 70S ribosomes or polysomes). Required for efficient processing of 16S rRNA. May interact with the 5'-terminal helix region of 16S rRNA.</text>
</comment>
<comment type="subunit">
    <text evidence="1">Monomer. Binds 30S ribosomal subunits, but not 50S ribosomal subunits or 70S ribosomes.</text>
</comment>
<comment type="subcellular location">
    <subcellularLocation>
        <location evidence="1">Cytoplasm</location>
    </subcellularLocation>
</comment>
<comment type="similarity">
    <text evidence="1">Belongs to the RbfA family.</text>
</comment>
<keyword id="KW-0963">Cytoplasm</keyword>
<keyword id="KW-0690">Ribosome biogenesis</keyword>
<accession>Q11BC7</accession>
<proteinExistence type="inferred from homology"/>
<protein>
    <recommendedName>
        <fullName evidence="1">Ribosome-binding factor A</fullName>
    </recommendedName>
</protein>
<gene>
    <name evidence="1" type="primary">rbfA</name>
    <name type="ordered locus">Meso_3931</name>
</gene>
<organism>
    <name type="scientific">Chelativorans sp. (strain BNC1)</name>
    <dbReference type="NCBI Taxonomy" id="266779"/>
    <lineage>
        <taxon>Bacteria</taxon>
        <taxon>Pseudomonadati</taxon>
        <taxon>Pseudomonadota</taxon>
        <taxon>Alphaproteobacteria</taxon>
        <taxon>Hyphomicrobiales</taxon>
        <taxon>Phyllobacteriaceae</taxon>
        <taxon>Chelativorans</taxon>
    </lineage>
</organism>